<sequence>MAESDGGEASPSGGGGGEGSPDPRRPPARPQLTKSRTISGSAASAFDRWGTSNSSSSILVRRSSTAPLPPGAAPRGLLTVAVDEPSYAAPNGGAAMLDRDWCYPSFLGPHASRPRPPRSQQQTPTTTAAAAADSRSPTPAAPPQTASVSQREEEKSLASVVKRPMLLDERRSLSPPPPQQRAPRFDLSPYLVLMLVVTVISFSLAIWQWMKATVLQEKIRSCCSVSTVDCKTTTEAFKINGQHGSDFINSADWNLASCSRMLVFAIPVFLVKYIDQLRRRNTDSIRLRSTEEEVPLKKRIAYKVDVFFSGHPYAKLLALLLATIILIASGGIALYVVSGSGFLEALWLSWTFVADSGNHADQVGLGPRIVSVSISSGGMLVFATMLGLVSDAISEKVDSWRKGKSEVIEVNHILILGWSDKLGSLLKQLAIANKSIGGGVVVVLAERDKEEMEMDIGKLEFDFMGTSVICRSGSPLILADLKKVSVSKARAIIVLASDENADQSDARALRVVLSLTGVKEGLRGHVVVEMSDLDNEPLVKLVGGELIETVVAHDVIGRLMIQCALQPGLAQIWEDILGFENAEFYIKRWPELDGMRFGDVLISFPDAVPCGVKIASKAGKILMNPDNDYVLQEGDEVLVIAEDDDTYVPASLPQVRKGFLPNIPTPPKYPEKILFCGWRRDIHDMIMVLEAFLAPGSELWMFNEVPEKERERKLTDGGMDIYGLTNIKLVHKEGNAVIRRHLESLPLETFDSILILADESVEDSIVHSDSRSLATLLLIRDIQSKRLPSKELKSPLRYNGFCHSSWIREMQHASDKSIIISEILDSRTRNLVSVSKISDYVLSNELVSMALAMVAEDKQINRVLEELFAEEGNEMCIRSAEFYLYEQEELSFFDIMVRARERDEVVIGYRLANDDQAIINPEQKSEIRKWSLDDVFVVISKAGNATYFVKTTVMRSNPVVYSSTF</sequence>
<accession>Q5N941</accession>
<accession>Q0JHD3</accession>
<accession>Q5N940</accession>
<keyword id="KW-0025">Alternative splicing</keyword>
<keyword id="KW-0407">Ion channel</keyword>
<keyword id="KW-0406">Ion transport</keyword>
<keyword id="KW-0472">Membrane</keyword>
<keyword id="KW-0539">Nucleus</keyword>
<keyword id="KW-1185">Reference proteome</keyword>
<keyword id="KW-0812">Transmembrane</keyword>
<keyword id="KW-1133">Transmembrane helix</keyword>
<keyword id="KW-0813">Transport</keyword>
<feature type="chain" id="PRO_0000004684" description="Probable ion channel POLLUX">
    <location>
        <begin position="1"/>
        <end position="965"/>
    </location>
</feature>
<feature type="transmembrane region" description="Helical" evidence="2">
    <location>
        <begin position="187"/>
        <end position="207"/>
    </location>
</feature>
<feature type="transmembrane region" description="Helical" evidence="2">
    <location>
        <begin position="251"/>
        <end position="271"/>
    </location>
</feature>
<feature type="transmembrane region" description="Helical" evidence="2">
    <location>
        <begin position="317"/>
        <end position="337"/>
    </location>
</feature>
<feature type="transmembrane region" description="Helical" evidence="2">
    <location>
        <begin position="369"/>
        <end position="389"/>
    </location>
</feature>
<feature type="domain" description="RCK N-terminal 1" evidence="3">
    <location>
        <begin position="410"/>
        <end position="551"/>
    </location>
</feature>
<feature type="domain" description="RCK N-terminal 2" evidence="3">
    <location>
        <begin position="670"/>
        <end position="818"/>
    </location>
</feature>
<feature type="region of interest" description="Disordered" evidence="4">
    <location>
        <begin position="1"/>
        <end position="76"/>
    </location>
</feature>
<feature type="region of interest" description="Disordered" evidence="4">
    <location>
        <begin position="108"/>
        <end position="158"/>
    </location>
</feature>
<feature type="compositionally biased region" description="Low complexity" evidence="4">
    <location>
        <begin position="1"/>
        <end position="11"/>
    </location>
</feature>
<feature type="compositionally biased region" description="Polar residues" evidence="4">
    <location>
        <begin position="32"/>
        <end position="42"/>
    </location>
</feature>
<feature type="compositionally biased region" description="Low complexity" evidence="4">
    <location>
        <begin position="52"/>
        <end position="66"/>
    </location>
</feature>
<feature type="compositionally biased region" description="Low complexity" evidence="4">
    <location>
        <begin position="118"/>
        <end position="149"/>
    </location>
</feature>
<feature type="splice variant" id="VSP_013298" description="In isoform 2." evidence="7">
    <original>AG</original>
    <variation>GD</variation>
    <location>
        <begin position="942"/>
        <end position="943"/>
    </location>
</feature>
<feature type="splice variant" id="VSP_013299" description="In isoform 2." evidence="7">
    <location>
        <begin position="944"/>
        <end position="965"/>
    </location>
</feature>
<comment type="function">
    <text evidence="5 6">Required for mycorrhizal symbiosis.</text>
</comment>
<comment type="subcellular location">
    <subcellularLocation>
        <location evidence="1">Nucleus membrane</location>
        <topology evidence="1">Multi-pass membrane protein</topology>
    </subcellularLocation>
</comment>
<comment type="alternative products">
    <event type="alternative splicing"/>
    <isoform>
        <id>Q5N941-1</id>
        <name>1</name>
        <sequence type="displayed"/>
    </isoform>
    <isoform>
        <id>Q5N941-2</id>
        <name>2</name>
        <sequence type="described" ref="VSP_013298 VSP_013299"/>
    </isoform>
</comment>
<comment type="tissue specificity">
    <text evidence="6">Expressed in roots, leaves, stems and panicles.</text>
</comment>
<comment type="induction">
    <text evidence="6">Not induced by mycorrhizal colonization.</text>
</comment>
<comment type="disruption phenotype">
    <text evidence="5 6">Defective in mycorrhizal symbiosis.</text>
</comment>
<comment type="miscellaneous">
    <text>Can restore nodulation but not rhizobial infection to a Medicago truncatula dmi1 mutant, but cannot restore mycorrhizal or rhizobial symbiosis in a Ljpollux mutant of Lotus japonicus.</text>
</comment>
<comment type="similarity">
    <text evidence="8">Belongs to the castor/pollux (TC 1.A.1.23) family.</text>
</comment>
<dbReference type="EMBL" id="AP003235">
    <property type="protein sequence ID" value="BAD81710.1"/>
    <property type="molecule type" value="Genomic_DNA"/>
</dbReference>
<dbReference type="EMBL" id="AP003235">
    <property type="protein sequence ID" value="BAD81711.1"/>
    <property type="molecule type" value="Genomic_DNA"/>
</dbReference>
<dbReference type="EMBL" id="AP003286">
    <property type="protein sequence ID" value="BAD82015.1"/>
    <property type="molecule type" value="Genomic_DNA"/>
</dbReference>
<dbReference type="EMBL" id="AP003286">
    <property type="protein sequence ID" value="BAD82016.1"/>
    <property type="molecule type" value="Genomic_DNA"/>
</dbReference>
<dbReference type="EMBL" id="AP008207">
    <property type="protein sequence ID" value="BAF06845.1"/>
    <property type="molecule type" value="Genomic_DNA"/>
</dbReference>
<dbReference type="EMBL" id="AP014957">
    <property type="protein sequence ID" value="BAS75431.1"/>
    <property type="molecule type" value="Genomic_DNA"/>
</dbReference>
<dbReference type="EMBL" id="AP014957">
    <property type="protein sequence ID" value="BAS75432.1"/>
    <property type="molecule type" value="Genomic_DNA"/>
</dbReference>
<dbReference type="EMBL" id="AK067564">
    <property type="status" value="NOT_ANNOTATED_CDS"/>
    <property type="molecule type" value="mRNA"/>
</dbReference>
<dbReference type="EMBL" id="AK072312">
    <property type="status" value="NOT_ANNOTATED_CDS"/>
    <property type="molecule type" value="mRNA"/>
</dbReference>
<dbReference type="EMBL" id="AK103428">
    <property type="status" value="NOT_ANNOTATED_CDS"/>
    <property type="molecule type" value="mRNA"/>
</dbReference>
<dbReference type="RefSeq" id="XP_015613349.1">
    <property type="nucleotide sequence ID" value="XM_015757863.1"/>
</dbReference>
<dbReference type="SMR" id="Q5N941"/>
<dbReference type="FunCoup" id="Q5N941">
    <property type="interactions" value="12"/>
</dbReference>
<dbReference type="STRING" id="39947.Q5N941"/>
<dbReference type="PaxDb" id="39947-Q5N941"/>
<dbReference type="EnsemblPlants" id="Os01t0870100-01">
    <molecule id="Q5N941-1"/>
    <property type="protein sequence ID" value="Os01t0870100-01"/>
    <property type="gene ID" value="Os01g0870100"/>
</dbReference>
<dbReference type="Gramene" id="Os01t0870100-01">
    <molecule id="Q5N941-1"/>
    <property type="protein sequence ID" value="Os01t0870100-01"/>
    <property type="gene ID" value="Os01g0870100"/>
</dbReference>
<dbReference type="KEGG" id="dosa:Os01g0870100"/>
<dbReference type="eggNOG" id="ENOG502QU6W">
    <property type="taxonomic scope" value="Eukaryota"/>
</dbReference>
<dbReference type="InParanoid" id="Q5N941"/>
<dbReference type="OMA" id="YVVDVCF"/>
<dbReference type="OrthoDB" id="414047at2759"/>
<dbReference type="Proteomes" id="UP000000763">
    <property type="component" value="Chromosome 1"/>
</dbReference>
<dbReference type="Proteomes" id="UP000059680">
    <property type="component" value="Chromosome 1"/>
</dbReference>
<dbReference type="ExpressionAtlas" id="Q5N941">
    <property type="expression patterns" value="baseline and differential"/>
</dbReference>
<dbReference type="GO" id="GO:0031965">
    <property type="term" value="C:nuclear membrane"/>
    <property type="evidence" value="ECO:0007669"/>
    <property type="project" value="UniProtKB-SubCell"/>
</dbReference>
<dbReference type="GO" id="GO:0034220">
    <property type="term" value="P:monoatomic ion transmembrane transport"/>
    <property type="evidence" value="ECO:0007669"/>
    <property type="project" value="UniProtKB-KW"/>
</dbReference>
<dbReference type="FunFam" id="3.40.50.720:FF:000176">
    <property type="entry name" value="Probable ion channel POLLUX"/>
    <property type="match status" value="1"/>
</dbReference>
<dbReference type="Gene3D" id="3.40.50.720">
    <property type="entry name" value="NAD(P)-binding Rossmann-like Domain"/>
    <property type="match status" value="1"/>
</dbReference>
<dbReference type="InterPro" id="IPR044849">
    <property type="entry name" value="CASTOR/POLLUX/SYM8-like"/>
</dbReference>
<dbReference type="InterPro" id="IPR010420">
    <property type="entry name" value="CASTOR/POLLUX/SYM8_dom"/>
</dbReference>
<dbReference type="InterPro" id="IPR036291">
    <property type="entry name" value="NAD(P)-bd_dom_sf"/>
</dbReference>
<dbReference type="InterPro" id="IPR003148">
    <property type="entry name" value="RCK_N"/>
</dbReference>
<dbReference type="PANTHER" id="PTHR31563">
    <property type="entry name" value="ION CHANNEL POLLUX-RELATED"/>
    <property type="match status" value="1"/>
</dbReference>
<dbReference type="PANTHER" id="PTHR31563:SF10">
    <property type="entry name" value="ION CHANNEL POLLUX-RELATED"/>
    <property type="match status" value="1"/>
</dbReference>
<dbReference type="Pfam" id="PF06241">
    <property type="entry name" value="Castor_Poll_mid"/>
    <property type="match status" value="1"/>
</dbReference>
<dbReference type="Pfam" id="PF22614">
    <property type="entry name" value="Slo-like_RCK"/>
    <property type="match status" value="1"/>
</dbReference>
<dbReference type="SUPFAM" id="SSF51735">
    <property type="entry name" value="NAD(P)-binding Rossmann-fold domains"/>
    <property type="match status" value="1"/>
</dbReference>
<dbReference type="PROSITE" id="PS51201">
    <property type="entry name" value="RCK_N"/>
    <property type="match status" value="2"/>
</dbReference>
<proteinExistence type="evidence at transcript level"/>
<reference key="1">
    <citation type="journal article" date="2002" name="Nature">
        <title>The genome sequence and structure of rice chromosome 1.</title>
        <authorList>
            <person name="Sasaki T."/>
            <person name="Matsumoto T."/>
            <person name="Yamamoto K."/>
            <person name="Sakata K."/>
            <person name="Baba T."/>
            <person name="Katayose Y."/>
            <person name="Wu J."/>
            <person name="Niimura Y."/>
            <person name="Cheng Z."/>
            <person name="Nagamura Y."/>
            <person name="Antonio B.A."/>
            <person name="Kanamori H."/>
            <person name="Hosokawa S."/>
            <person name="Masukawa M."/>
            <person name="Arikawa K."/>
            <person name="Chiden Y."/>
            <person name="Hayashi M."/>
            <person name="Okamoto M."/>
            <person name="Ando T."/>
            <person name="Aoki H."/>
            <person name="Arita K."/>
            <person name="Hamada M."/>
            <person name="Harada C."/>
            <person name="Hijishita S."/>
            <person name="Honda M."/>
            <person name="Ichikawa Y."/>
            <person name="Idonuma A."/>
            <person name="Iijima M."/>
            <person name="Ikeda M."/>
            <person name="Ikeno M."/>
            <person name="Ito S."/>
            <person name="Ito T."/>
            <person name="Ito Y."/>
            <person name="Ito Y."/>
            <person name="Iwabuchi A."/>
            <person name="Kamiya K."/>
            <person name="Karasawa W."/>
            <person name="Katagiri S."/>
            <person name="Kikuta A."/>
            <person name="Kobayashi N."/>
            <person name="Kono I."/>
            <person name="Machita K."/>
            <person name="Maehara T."/>
            <person name="Mizuno H."/>
            <person name="Mizubayashi T."/>
            <person name="Mukai Y."/>
            <person name="Nagasaki H."/>
            <person name="Nakashima M."/>
            <person name="Nakama Y."/>
            <person name="Nakamichi Y."/>
            <person name="Nakamura M."/>
            <person name="Namiki N."/>
            <person name="Negishi M."/>
            <person name="Ohta I."/>
            <person name="Ono N."/>
            <person name="Saji S."/>
            <person name="Sakai K."/>
            <person name="Shibata M."/>
            <person name="Shimokawa T."/>
            <person name="Shomura A."/>
            <person name="Song J."/>
            <person name="Takazaki Y."/>
            <person name="Terasawa K."/>
            <person name="Tsuji K."/>
            <person name="Waki K."/>
            <person name="Yamagata H."/>
            <person name="Yamane H."/>
            <person name="Yoshiki S."/>
            <person name="Yoshihara R."/>
            <person name="Yukawa K."/>
            <person name="Zhong H."/>
            <person name="Iwama H."/>
            <person name="Endo T."/>
            <person name="Ito H."/>
            <person name="Hahn J.H."/>
            <person name="Kim H.-I."/>
            <person name="Eun M.-Y."/>
            <person name="Yano M."/>
            <person name="Jiang J."/>
            <person name="Gojobori T."/>
        </authorList>
    </citation>
    <scope>NUCLEOTIDE SEQUENCE [LARGE SCALE GENOMIC DNA]</scope>
    <source>
        <strain>cv. Nipponbare</strain>
    </source>
</reference>
<reference key="2">
    <citation type="journal article" date="2005" name="Nature">
        <title>The map-based sequence of the rice genome.</title>
        <authorList>
            <consortium name="International rice genome sequencing project (IRGSP)"/>
        </authorList>
    </citation>
    <scope>NUCLEOTIDE SEQUENCE [LARGE SCALE GENOMIC DNA]</scope>
    <source>
        <strain>cv. Nipponbare</strain>
    </source>
</reference>
<reference key="3">
    <citation type="journal article" date="2008" name="Nucleic Acids Res.">
        <title>The rice annotation project database (RAP-DB): 2008 update.</title>
        <authorList>
            <consortium name="The rice annotation project (RAP)"/>
        </authorList>
    </citation>
    <scope>GENOME REANNOTATION</scope>
    <source>
        <strain>cv. Nipponbare</strain>
    </source>
</reference>
<reference key="4">
    <citation type="journal article" date="2013" name="Rice">
        <title>Improvement of the Oryza sativa Nipponbare reference genome using next generation sequence and optical map data.</title>
        <authorList>
            <person name="Kawahara Y."/>
            <person name="de la Bastide M."/>
            <person name="Hamilton J.P."/>
            <person name="Kanamori H."/>
            <person name="McCombie W.R."/>
            <person name="Ouyang S."/>
            <person name="Schwartz D.C."/>
            <person name="Tanaka T."/>
            <person name="Wu J."/>
            <person name="Zhou S."/>
            <person name="Childs K.L."/>
            <person name="Davidson R.M."/>
            <person name="Lin H."/>
            <person name="Quesada-Ocampo L."/>
            <person name="Vaillancourt B."/>
            <person name="Sakai H."/>
            <person name="Lee S.S."/>
            <person name="Kim J."/>
            <person name="Numa H."/>
            <person name="Itoh T."/>
            <person name="Buell C.R."/>
            <person name="Matsumoto T."/>
        </authorList>
    </citation>
    <scope>GENOME REANNOTATION</scope>
    <source>
        <strain>cv. Nipponbare</strain>
    </source>
</reference>
<reference key="5">
    <citation type="journal article" date="2003" name="Science">
        <title>Collection, mapping, and annotation of over 28,000 cDNA clones from japonica rice.</title>
        <authorList>
            <consortium name="The rice full-length cDNA consortium"/>
        </authorList>
    </citation>
    <scope>NUCLEOTIDE SEQUENCE [LARGE SCALE MRNA] (ISOFORMS 1 AND 2)</scope>
    <source>
        <strain>cv. Nipponbare</strain>
    </source>
</reference>
<reference key="6">
    <citation type="journal article" date="2008" name="Plant Cell Physiol.">
        <title>Divergence of evolutionary ways among common sym genes: CASTOR and CCaMK show functional conservation between two symbiosis systems and constitute the root of a common signaling pathway.</title>
        <authorList>
            <person name="Banba M."/>
            <person name="Gutjahr C."/>
            <person name="Miyao A."/>
            <person name="Hirochika H."/>
            <person name="Paszkowski U."/>
            <person name="Kouchi H."/>
            <person name="Imaizumi-Anraku H."/>
        </authorList>
    </citation>
    <scope>FUNCTION</scope>
    <scope>DISRUPTION PHENOTYPE</scope>
</reference>
<reference key="7">
    <citation type="journal article" date="2009" name="Plant Physiol.">
        <title>Antiquity and function of CASTOR and POLLUX, the twin ion channel-encoding genes key to the evolution of root symbioses in plants.</title>
        <authorList>
            <person name="Chen C."/>
            <person name="Fan C."/>
            <person name="Gao M."/>
            <person name="Zhu H."/>
        </authorList>
    </citation>
    <scope>FUNCTION</scope>
    <scope>TISSUE SPECIFICITY</scope>
    <scope>INDUCTION</scope>
    <scope>DISRUPTION PHENOTYPE</scope>
</reference>
<protein>
    <recommendedName>
        <fullName>Probable ion channel POLLUX</fullName>
        <shortName>OsPOLLUX</shortName>
    </recommendedName>
    <alternativeName>
        <fullName>Probable ion channel DMI1</fullName>
    </alternativeName>
</protein>
<evidence type="ECO:0000250" key="1"/>
<evidence type="ECO:0000255" key="2"/>
<evidence type="ECO:0000255" key="3">
    <source>
        <dbReference type="PROSITE-ProRule" id="PRU00543"/>
    </source>
</evidence>
<evidence type="ECO:0000256" key="4">
    <source>
        <dbReference type="SAM" id="MobiDB-lite"/>
    </source>
</evidence>
<evidence type="ECO:0000269" key="5">
    <source>
    </source>
</evidence>
<evidence type="ECO:0000269" key="6">
    <source>
    </source>
</evidence>
<evidence type="ECO:0000303" key="7">
    <source>
    </source>
</evidence>
<evidence type="ECO:0000305" key="8"/>
<organism>
    <name type="scientific">Oryza sativa subsp. japonica</name>
    <name type="common">Rice</name>
    <dbReference type="NCBI Taxonomy" id="39947"/>
    <lineage>
        <taxon>Eukaryota</taxon>
        <taxon>Viridiplantae</taxon>
        <taxon>Streptophyta</taxon>
        <taxon>Embryophyta</taxon>
        <taxon>Tracheophyta</taxon>
        <taxon>Spermatophyta</taxon>
        <taxon>Magnoliopsida</taxon>
        <taxon>Liliopsida</taxon>
        <taxon>Poales</taxon>
        <taxon>Poaceae</taxon>
        <taxon>BOP clade</taxon>
        <taxon>Oryzoideae</taxon>
        <taxon>Oryzeae</taxon>
        <taxon>Oryzinae</taxon>
        <taxon>Oryza</taxon>
        <taxon>Oryza sativa</taxon>
    </lineage>
</organism>
<gene>
    <name type="ordered locus">Os01g0870100</name>
    <name type="ordered locus">LOC_Os01g64980</name>
    <name type="ORF">P0039A07.9</name>
    <name type="ORF">P0677H08.41</name>
</gene>
<name>POLLU_ORYSJ</name>